<protein>
    <recommendedName>
        <fullName>Multifunctional CCA protein</fullName>
    </recommendedName>
    <domain>
        <recommendedName>
            <fullName>CCA-adding enzyme</fullName>
            <ecNumber evidence="6">2.7.7.72</ecNumber>
        </recommendedName>
        <alternativeName>
            <fullName>CCA tRNA nucleotidyltransferase</fullName>
        </alternativeName>
        <alternativeName>
            <fullName>tRNA CCA-pyrophosphorylase</fullName>
        </alternativeName>
        <alternativeName>
            <fullName>tRNA adenylyl-/cytidylyl-transferase</fullName>
        </alternativeName>
        <alternativeName>
            <fullName>tRNA nucleotidyltransferase</fullName>
        </alternativeName>
        <alternativeName>
            <fullName>tRNA-NT</fullName>
        </alternativeName>
    </domain>
    <domain>
        <recommendedName>
            <fullName>2'-nucleotidase</fullName>
            <ecNumber>3.1.3.-</ecNumber>
        </recommendedName>
    </domain>
    <domain>
        <recommendedName>
            <fullName>2',3'-cyclic phosphodiesterase</fullName>
            <ecNumber>3.1.4.-</ecNumber>
        </recommendedName>
    </domain>
    <domain>
        <recommendedName>
            <fullName>Phosphatase</fullName>
            <ecNumber>3.1.3.-</ecNumber>
        </recommendedName>
    </domain>
</protein>
<dbReference type="EC" id="2.7.7.72" evidence="6"/>
<dbReference type="EC" id="3.1.3.-"/>
<dbReference type="EC" id="3.1.4.-"/>
<dbReference type="EMBL" id="M12788">
    <property type="protein sequence ID" value="AAA23541.1"/>
    <property type="molecule type" value="Genomic_DNA"/>
</dbReference>
<dbReference type="EMBL" id="U28379">
    <property type="protein sequence ID" value="AAA89136.1"/>
    <property type="molecule type" value="Genomic_DNA"/>
</dbReference>
<dbReference type="EMBL" id="U00096">
    <property type="protein sequence ID" value="AAC76092.1"/>
    <property type="molecule type" value="Genomic_DNA"/>
</dbReference>
<dbReference type="EMBL" id="AP009048">
    <property type="protein sequence ID" value="BAE77107.1"/>
    <property type="molecule type" value="Genomic_DNA"/>
</dbReference>
<dbReference type="PIR" id="A25215">
    <property type="entry name" value="RNECTA"/>
</dbReference>
<dbReference type="RefSeq" id="NP_417528.1">
    <property type="nucleotide sequence ID" value="NC_000913.3"/>
</dbReference>
<dbReference type="RefSeq" id="WP_000708487.1">
    <property type="nucleotide sequence ID" value="NZ_STEB01000001.1"/>
</dbReference>
<dbReference type="SMR" id="P06961"/>
<dbReference type="BioGRID" id="4259255">
    <property type="interactions" value="80"/>
</dbReference>
<dbReference type="DIP" id="DIP-9250N"/>
<dbReference type="FunCoup" id="P06961">
    <property type="interactions" value="322"/>
</dbReference>
<dbReference type="IntAct" id="P06961">
    <property type="interactions" value="25"/>
</dbReference>
<dbReference type="STRING" id="511145.b3056"/>
<dbReference type="ChEMBL" id="CHEMBL3309020"/>
<dbReference type="jPOST" id="P06961"/>
<dbReference type="PaxDb" id="511145-b3056"/>
<dbReference type="EnsemblBacteria" id="AAC76092">
    <property type="protein sequence ID" value="AAC76092"/>
    <property type="gene ID" value="b3056"/>
</dbReference>
<dbReference type="GeneID" id="947553"/>
<dbReference type="KEGG" id="ecj:JW3028"/>
<dbReference type="KEGG" id="eco:b3056"/>
<dbReference type="KEGG" id="ecoc:C3026_16700"/>
<dbReference type="PATRIC" id="fig|1411691.4.peg.3675"/>
<dbReference type="EchoBASE" id="EB0134"/>
<dbReference type="eggNOG" id="COG0617">
    <property type="taxonomic scope" value="Bacteria"/>
</dbReference>
<dbReference type="HOGENOM" id="CLU_015961_1_1_6"/>
<dbReference type="InParanoid" id="P06961"/>
<dbReference type="OMA" id="GWTFHGH"/>
<dbReference type="OrthoDB" id="9805698at2"/>
<dbReference type="PhylomeDB" id="P06961"/>
<dbReference type="BioCyc" id="EcoCyc:EG10136-MONOMER"/>
<dbReference type="BioCyc" id="MetaCyc:EG10136-MONOMER"/>
<dbReference type="BRENDA" id="2.7.7.72">
    <property type="organism ID" value="2026"/>
</dbReference>
<dbReference type="BRENDA" id="3.1.4.16">
    <property type="organism ID" value="2026"/>
</dbReference>
<dbReference type="BRENDA" id="3.1.4.37">
    <property type="organism ID" value="2026"/>
</dbReference>
<dbReference type="SABIO-RK" id="P06961"/>
<dbReference type="PRO" id="PR:P06961"/>
<dbReference type="Proteomes" id="UP000000625">
    <property type="component" value="Chromosome"/>
</dbReference>
<dbReference type="GO" id="GO:0005524">
    <property type="term" value="F:ATP binding"/>
    <property type="evidence" value="ECO:0007669"/>
    <property type="project" value="UniProtKB-UniRule"/>
</dbReference>
<dbReference type="GO" id="GO:0004810">
    <property type="term" value="F:CCA tRNA nucleotidyltransferase activity"/>
    <property type="evidence" value="ECO:0000314"/>
    <property type="project" value="EcoCyc"/>
</dbReference>
<dbReference type="GO" id="GO:0160016">
    <property type="term" value="F:CCACCA tRNA nucleotidyltransferase activity"/>
    <property type="evidence" value="ECO:0000314"/>
    <property type="project" value="UniProtKB"/>
</dbReference>
<dbReference type="GO" id="GO:0004112">
    <property type="term" value="F:cyclic-nucleotide phosphodiesterase activity"/>
    <property type="evidence" value="ECO:0000314"/>
    <property type="project" value="EcoCyc"/>
</dbReference>
<dbReference type="GO" id="GO:0000287">
    <property type="term" value="F:magnesium ion binding"/>
    <property type="evidence" value="ECO:0007669"/>
    <property type="project" value="UniProtKB-UniRule"/>
</dbReference>
<dbReference type="GO" id="GO:0016791">
    <property type="term" value="F:phosphatase activity"/>
    <property type="evidence" value="ECO:0007669"/>
    <property type="project" value="UniProtKB-UniRule"/>
</dbReference>
<dbReference type="GO" id="GO:0000049">
    <property type="term" value="F:tRNA binding"/>
    <property type="evidence" value="ECO:0007669"/>
    <property type="project" value="UniProtKB-UniRule"/>
</dbReference>
<dbReference type="GO" id="GO:0042245">
    <property type="term" value="P:RNA repair"/>
    <property type="evidence" value="ECO:0000315"/>
    <property type="project" value="EcoCyc"/>
</dbReference>
<dbReference type="GO" id="GO:0001680">
    <property type="term" value="P:tRNA 3'-terminal CCA addition"/>
    <property type="evidence" value="ECO:0000314"/>
    <property type="project" value="EcoCyc"/>
</dbReference>
<dbReference type="GO" id="GO:0106354">
    <property type="term" value="P:tRNA surveillance"/>
    <property type="evidence" value="ECO:0000314"/>
    <property type="project" value="UniProtKB"/>
</dbReference>
<dbReference type="CDD" id="cd00077">
    <property type="entry name" value="HDc"/>
    <property type="match status" value="1"/>
</dbReference>
<dbReference type="CDD" id="cd05398">
    <property type="entry name" value="NT_ClassII-CCAase"/>
    <property type="match status" value="1"/>
</dbReference>
<dbReference type="FunFam" id="1.10.3090.10:FF:000001">
    <property type="entry name" value="Multifunctional CCA protein"/>
    <property type="match status" value="1"/>
</dbReference>
<dbReference type="FunFam" id="3.30.460.10:FF:000016">
    <property type="entry name" value="Multifunctional CCA protein"/>
    <property type="match status" value="1"/>
</dbReference>
<dbReference type="Gene3D" id="3.30.460.10">
    <property type="entry name" value="Beta Polymerase, domain 2"/>
    <property type="match status" value="1"/>
</dbReference>
<dbReference type="Gene3D" id="1.10.3090.10">
    <property type="entry name" value="cca-adding enzyme, domain 2"/>
    <property type="match status" value="1"/>
</dbReference>
<dbReference type="HAMAP" id="MF_01261">
    <property type="entry name" value="CCA_bact_type1"/>
    <property type="match status" value="1"/>
</dbReference>
<dbReference type="HAMAP" id="MF_01262">
    <property type="entry name" value="CCA_bact_type2"/>
    <property type="match status" value="1"/>
</dbReference>
<dbReference type="InterPro" id="IPR012006">
    <property type="entry name" value="CCA_bact"/>
</dbReference>
<dbReference type="InterPro" id="IPR003607">
    <property type="entry name" value="HD/PDEase_dom"/>
</dbReference>
<dbReference type="InterPro" id="IPR006674">
    <property type="entry name" value="HD_domain"/>
</dbReference>
<dbReference type="InterPro" id="IPR043519">
    <property type="entry name" value="NT_sf"/>
</dbReference>
<dbReference type="InterPro" id="IPR002646">
    <property type="entry name" value="PolA_pol_head_dom"/>
</dbReference>
<dbReference type="InterPro" id="IPR032828">
    <property type="entry name" value="PolyA_RNA-bd"/>
</dbReference>
<dbReference type="InterPro" id="IPR050124">
    <property type="entry name" value="tRNA_CCA-adding_enzyme"/>
</dbReference>
<dbReference type="NCBIfam" id="NF008137">
    <property type="entry name" value="PRK10885.1"/>
    <property type="match status" value="1"/>
</dbReference>
<dbReference type="PANTHER" id="PTHR47545">
    <property type="entry name" value="MULTIFUNCTIONAL CCA PROTEIN"/>
    <property type="match status" value="1"/>
</dbReference>
<dbReference type="PANTHER" id="PTHR47545:SF1">
    <property type="entry name" value="MULTIFUNCTIONAL CCA PROTEIN"/>
    <property type="match status" value="1"/>
</dbReference>
<dbReference type="Pfam" id="PF01966">
    <property type="entry name" value="HD"/>
    <property type="match status" value="1"/>
</dbReference>
<dbReference type="Pfam" id="PF01743">
    <property type="entry name" value="PolyA_pol"/>
    <property type="match status" value="1"/>
</dbReference>
<dbReference type="Pfam" id="PF12627">
    <property type="entry name" value="PolyA_pol_RNAbd"/>
    <property type="match status" value="1"/>
</dbReference>
<dbReference type="PIRSF" id="PIRSF000813">
    <property type="entry name" value="CCA_bact"/>
    <property type="match status" value="1"/>
</dbReference>
<dbReference type="SUPFAM" id="SSF81301">
    <property type="entry name" value="Nucleotidyltransferase"/>
    <property type="match status" value="1"/>
</dbReference>
<dbReference type="SUPFAM" id="SSF81891">
    <property type="entry name" value="Poly A polymerase C-terminal region-like"/>
    <property type="match status" value="1"/>
</dbReference>
<dbReference type="PROSITE" id="PS51831">
    <property type="entry name" value="HD"/>
    <property type="match status" value="1"/>
</dbReference>
<keyword id="KW-0067">ATP-binding</keyword>
<keyword id="KW-0378">Hydrolase</keyword>
<keyword id="KW-0460">Magnesium</keyword>
<keyword id="KW-0479">Metal-binding</keyword>
<keyword id="KW-0511">Multifunctional enzyme</keyword>
<keyword id="KW-0533">Nickel</keyword>
<keyword id="KW-0547">Nucleotide-binding</keyword>
<keyword id="KW-0548">Nucleotidyltransferase</keyword>
<keyword id="KW-1185">Reference proteome</keyword>
<keyword id="KW-0692">RNA repair</keyword>
<keyword id="KW-0694">RNA-binding</keyword>
<keyword id="KW-0808">Transferase</keyword>
<keyword id="KW-0819">tRNA processing</keyword>
<gene>
    <name type="primary">cca</name>
    <name type="ordered locus">b3056</name>
    <name type="ordered locus">JW3028</name>
</gene>
<reference key="1">
    <citation type="journal article" date="1986" name="J. Biol. Chem.">
        <title>Cloning, sequencing, and species relatedness of the Escherichia coli cca gene encoding the enzyme tRNA nucleotidyltransferase.</title>
        <authorList>
            <person name="Cudny H."/>
            <person name="Lupski J.R."/>
            <person name="Godson G.N."/>
            <person name="Deutscher M.P."/>
        </authorList>
    </citation>
    <scope>NUCLEOTIDE SEQUENCE [GENOMIC DNA]</scope>
</reference>
<reference key="2">
    <citation type="journal article" date="1997" name="Science">
        <title>The complete genome sequence of Escherichia coli K-12.</title>
        <authorList>
            <person name="Blattner F.R."/>
            <person name="Plunkett G. III"/>
            <person name="Bloch C.A."/>
            <person name="Perna N.T."/>
            <person name="Burland V."/>
            <person name="Riley M."/>
            <person name="Collado-Vides J."/>
            <person name="Glasner J.D."/>
            <person name="Rode C.K."/>
            <person name="Mayhew G.F."/>
            <person name="Gregor J."/>
            <person name="Davis N.W."/>
            <person name="Kirkpatrick H.A."/>
            <person name="Goeden M.A."/>
            <person name="Rose D.J."/>
            <person name="Mau B."/>
            <person name="Shao Y."/>
        </authorList>
    </citation>
    <scope>NUCLEOTIDE SEQUENCE [LARGE SCALE GENOMIC DNA]</scope>
    <source>
        <strain>K12 / MG1655 / ATCC 47076</strain>
    </source>
</reference>
<reference key="3">
    <citation type="journal article" date="2006" name="Mol. Syst. Biol.">
        <title>Highly accurate genome sequences of Escherichia coli K-12 strains MG1655 and W3110.</title>
        <authorList>
            <person name="Hayashi K."/>
            <person name="Morooka N."/>
            <person name="Yamamoto Y."/>
            <person name="Fujita K."/>
            <person name="Isono K."/>
            <person name="Choi S."/>
            <person name="Ohtsubo E."/>
            <person name="Baba T."/>
            <person name="Wanner B.L."/>
            <person name="Mori H."/>
            <person name="Horiuchi T."/>
        </authorList>
    </citation>
    <scope>NUCLEOTIDE SEQUENCE [LARGE SCALE GENOMIC DNA]</scope>
    <source>
        <strain>K12 / W3110 / ATCC 27325 / DSM 5911</strain>
    </source>
</reference>
<reference key="4">
    <citation type="journal article" date="1986" name="J. Biol. Chem.">
        <title>A mutation in Escherichia coli tRNA nucleotidyltransferase that affects only AMP incorporation is in a sequence often associated with nucleotide-binding proteins.</title>
        <authorList>
            <person name="Zhu L.Q."/>
            <person name="Cudny H."/>
            <person name="Deutscher M.P."/>
        </authorList>
    </citation>
    <scope>NUCLEOTIDE SEQUENCE [GENOMIC DNA] OF 65-76</scope>
    <scope>MUTAGENESIS OF GLY-70</scope>
</reference>
<reference key="5">
    <citation type="journal article" date="1986" name="J. Biol. Chem.">
        <title>High-level overexpression, rapid purification, and properties of Escherichia coli tRNA nucleotidyltransferase.</title>
        <authorList>
            <person name="Cudny H."/>
            <person name="Deutscher M.P."/>
        </authorList>
    </citation>
    <scope>FUNCTION</scope>
    <scope>NUCLEOTIDYLTRANSFERASE ACTIVITY</scope>
    <scope>BIOPHYSICOCHEMICAL PROPERTIES</scope>
</reference>
<reference key="6">
    <citation type="journal article" date="2004" name="J. Biol. Chem.">
        <title>The HD domain of the Escherichia coli tRNA nucleotidyltransferase has 2',3'-cyclic phosphodiesterase, 2'-nucleotidase, and phosphatase activities.</title>
        <authorList>
            <person name="Yakunin A.F."/>
            <person name="Proudfoot M."/>
            <person name="Kuznetsova E."/>
            <person name="Savchenko A."/>
            <person name="Brown G."/>
            <person name="Arrowsmith C.H."/>
            <person name="Edwards A.M."/>
        </authorList>
    </citation>
    <scope>PHOSPHOHYDROLASE ACTIVITIES</scope>
    <scope>FUNCTION</scope>
    <scope>COFACTOR</scope>
    <scope>SUBUNIT</scope>
    <scope>BIOPHYSICOCHEMICAL PROPERTIES</scope>
    <scope>MUTAGENESIS OF ASP-21; ASP-23; HIS-255; ASP-256; HIS-305 AND ASP-306</scope>
</reference>
<reference key="7">
    <citation type="journal article" date="2011" name="Science">
        <title>tRNAs marked with CCACCA are targeted for degradation.</title>
        <authorList>
            <person name="Wilusz J.E."/>
            <person name="Whipple J.M."/>
            <person name="Phizicky E.M."/>
            <person name="Sharp P.A."/>
        </authorList>
    </citation>
    <scope>FUNCTION</scope>
    <scope>CATALYTIC ACTIVITY</scope>
</reference>
<proteinExistence type="evidence at protein level"/>
<feature type="chain" id="PRO_0000138975" description="Multifunctional CCA protein">
    <location>
        <begin position="1"/>
        <end position="412"/>
    </location>
</feature>
<feature type="domain" description="HD" evidence="3">
    <location>
        <begin position="228"/>
        <end position="329"/>
    </location>
</feature>
<feature type="binding site" evidence="3">
    <location>
        <position position="8"/>
    </location>
    <ligand>
        <name>ATP</name>
        <dbReference type="ChEBI" id="CHEBI:30616"/>
    </ligand>
</feature>
<feature type="binding site" evidence="3">
    <location>
        <position position="8"/>
    </location>
    <ligand>
        <name>CTP</name>
        <dbReference type="ChEBI" id="CHEBI:37563"/>
    </ligand>
</feature>
<feature type="binding site" evidence="3">
    <location>
        <position position="11"/>
    </location>
    <ligand>
        <name>ATP</name>
        <dbReference type="ChEBI" id="CHEBI:30616"/>
    </ligand>
</feature>
<feature type="binding site" evidence="3">
    <location>
        <position position="11"/>
    </location>
    <ligand>
        <name>CTP</name>
        <dbReference type="ChEBI" id="CHEBI:37563"/>
    </ligand>
</feature>
<feature type="binding site" evidence="2">
    <location>
        <position position="21"/>
    </location>
    <ligand>
        <name>Mg(2+)</name>
        <dbReference type="ChEBI" id="CHEBI:18420"/>
    </ligand>
</feature>
<feature type="binding site" evidence="2">
    <location>
        <position position="23"/>
    </location>
    <ligand>
        <name>Mg(2+)</name>
        <dbReference type="ChEBI" id="CHEBI:18420"/>
    </ligand>
</feature>
<feature type="binding site" evidence="3">
    <location>
        <position position="91"/>
    </location>
    <ligand>
        <name>ATP</name>
        <dbReference type="ChEBI" id="CHEBI:30616"/>
    </ligand>
</feature>
<feature type="binding site" evidence="3">
    <location>
        <position position="91"/>
    </location>
    <ligand>
        <name>CTP</name>
        <dbReference type="ChEBI" id="CHEBI:37563"/>
    </ligand>
</feature>
<feature type="binding site" evidence="3">
    <location>
        <position position="137"/>
    </location>
    <ligand>
        <name>ATP</name>
        <dbReference type="ChEBI" id="CHEBI:30616"/>
    </ligand>
</feature>
<feature type="binding site" evidence="3">
    <location>
        <position position="137"/>
    </location>
    <ligand>
        <name>CTP</name>
        <dbReference type="ChEBI" id="CHEBI:37563"/>
    </ligand>
</feature>
<feature type="binding site" evidence="3">
    <location>
        <position position="140"/>
    </location>
    <ligand>
        <name>ATP</name>
        <dbReference type="ChEBI" id="CHEBI:30616"/>
    </ligand>
</feature>
<feature type="binding site" evidence="3">
    <location>
        <position position="140"/>
    </location>
    <ligand>
        <name>CTP</name>
        <dbReference type="ChEBI" id="CHEBI:37563"/>
    </ligand>
</feature>
<feature type="mutagenesis site" description="No effect on phosphodiesterase and phosphatase activities." evidence="4">
    <original>D</original>
    <variation>A</variation>
    <location>
        <position position="21"/>
    </location>
</feature>
<feature type="mutagenesis site" description="No effect on phosphodiesterase and phosphatase activities." evidence="4">
    <original>D</original>
    <variation>A</variation>
    <location>
        <position position="23"/>
    </location>
</feature>
<feature type="mutagenesis site" description="Lowered AMP incorporation." evidence="7">
    <original>G</original>
    <variation>D</variation>
    <location>
        <position position="70"/>
    </location>
</feature>
<feature type="mutagenesis site" description="Loss of phosphodiesterase and phosphatase activities." evidence="4">
    <original>H</original>
    <variation>A</variation>
    <location>
        <position position="255"/>
    </location>
</feature>
<feature type="mutagenesis site" description="Loss of phosphodiesterase and phosphatase activities." evidence="4">
    <original>D</original>
    <variation>A</variation>
    <location>
        <position position="256"/>
    </location>
</feature>
<feature type="mutagenesis site" description="Loss of phosphodiesterase and phosphatase activities." evidence="4">
    <original>H</original>
    <variation>A</variation>
    <location>
        <position position="305"/>
    </location>
</feature>
<feature type="mutagenesis site" description="Still possesses phosphodiesterase and phosphatase activities." evidence="4">
    <original>D</original>
    <variation>A</variation>
    <location>
        <position position="306"/>
    </location>
</feature>
<comment type="function">
    <text evidence="1 4 5 6">Catalyzes the addition and repair of the essential 3'-terminal CCA sequence in tRNAs without using a nucleic acid template (PubMed:3516995). Adds these three nucleotides in the order of C, C, and A to the tRNA nucleotide-73, using CTP and ATP as substrates and producing inorganic pyrophosphate (PubMed:3516995). tRNA 3'-terminal CCA addition is required both for tRNA processing and repair (PubMed:22076379). Also involved in tRNA surveillance by mediating tandem CCA addition to generate a CCACCA at the 3' terminus of unstable tRNAs (PubMed:22076379). While stable tRNAs receive only 3'-terminal CCA, unstable tRNAs are marked with CCACCA and rapidly degraded (PubMed:22076379). The structural flexibility of RNA controls the choice between CCA versus CCACCA addition: following the first CCA addition cycle, nucleotide-binding to the active site triggers a clockwise screw motion, producing torque on the RNA (By similarity). This ejects stable RNAs, whereas unstable RNAs are refolded while bound to the enzyme and subjected to a second CCA catalytic cycle (By similarity). Also shows highest phosphatase activity in the presence of Ni(2+) and hydrolyzes pyrophosphate, canonical 5'-nucleoside tri- and diphosphates, NADP, and 2'-AMP with the production of Pi (PubMed:15210699). Displays a metal-independent phosphodiesterase activity toward 2',3'-cAMP, 2',3'-cGMP, and 2',3'-cCMP (PubMed:15210699). Without metal or in the presence of Mg(2+), this protein hydrolyzes 2',3'-cyclic substrates with the formation of 2'-nucleotides, whereas in the presence of Ni(2+), it also produces some 3'-nucleotides (PubMed:15210699). These phosphohydrolase activities are probably involved in the repair of the tRNA 3'-CCA terminus degraded by intracellular RNases (PubMed:15210699).</text>
</comment>
<comment type="catalytic activity">
    <reaction evidence="6">
        <text>a tRNA precursor + 2 CTP + ATP = a tRNA with a 3' CCA end + 3 diphosphate</text>
        <dbReference type="Rhea" id="RHEA:14433"/>
        <dbReference type="Rhea" id="RHEA-COMP:10465"/>
        <dbReference type="Rhea" id="RHEA-COMP:10468"/>
        <dbReference type="ChEBI" id="CHEBI:30616"/>
        <dbReference type="ChEBI" id="CHEBI:33019"/>
        <dbReference type="ChEBI" id="CHEBI:37563"/>
        <dbReference type="ChEBI" id="CHEBI:74896"/>
        <dbReference type="ChEBI" id="CHEBI:83071"/>
        <dbReference type="EC" id="2.7.7.72"/>
    </reaction>
</comment>
<comment type="catalytic activity">
    <reaction evidence="5">
        <text>a tRNA with a 3' CCA end + 2 CTP + ATP = a tRNA with a 3' CCACCA end + 3 diphosphate</text>
        <dbReference type="Rhea" id="RHEA:76235"/>
        <dbReference type="Rhea" id="RHEA-COMP:10468"/>
        <dbReference type="Rhea" id="RHEA-COMP:18655"/>
        <dbReference type="ChEBI" id="CHEBI:30616"/>
        <dbReference type="ChEBI" id="CHEBI:33019"/>
        <dbReference type="ChEBI" id="CHEBI:37563"/>
        <dbReference type="ChEBI" id="CHEBI:83071"/>
        <dbReference type="ChEBI" id="CHEBI:195187"/>
    </reaction>
    <physiologicalReaction direction="left-to-right" evidence="5">
        <dbReference type="Rhea" id="RHEA:76236"/>
    </physiologicalReaction>
</comment>
<comment type="cofactor">
    <cofactor evidence="1">
        <name>Mg(2+)</name>
        <dbReference type="ChEBI" id="CHEBI:18420"/>
    </cofactor>
    <text evidence="1">Magnesium is required for nucleotidyltransferase activity.</text>
</comment>
<comment type="cofactor">
    <cofactor>
        <name>Ni(2+)</name>
        <dbReference type="ChEBI" id="CHEBI:49786"/>
    </cofactor>
    <text evidence="4">Nickel for phosphatase activity.</text>
</comment>
<comment type="activity regulation">
    <text>Both phosphatase and phosphodiesterase activities are competitively inhibited by low concentrations of the E.coli tRNA (10 nM). Cu(2+) stimulates the hydrolysis of pyrophosphate and ATP and completely inhibits the hydrolysis of 2'-AMP. The phosphodiesterase activity is inhibited by Zn(2+), Cu(2+) and Co(2+).</text>
</comment>
<comment type="biophysicochemical properties">
    <kinetics>
        <KM evidence="4 6">0.33 mM for ATP (in the tRNA-NT activity assay)</KM>
        <KM evidence="4 6">0.03 mM for CTP (in the tRNA-NT activity assay)</KM>
        <KM evidence="4 6">0.015 mM for tRNA-CC</KM>
        <KM evidence="4 6">0.02 mM for tRNA-C</KM>
        <KM evidence="4 6">6.2 mM for pNPP</KM>
        <KM evidence="4 6">0.1 mM for PPi</KM>
        <KM evidence="4 6">0.15 mM for NADP</KM>
        <KM evidence="4 6">0.19 mM for ADP</KM>
        <KM evidence="4 6">0.18 mM for ATP (in the phosphatase activity assay)</KM>
        <KM evidence="4 6">0.53 mM for CDP</KM>
        <KM evidence="4 6">0.13 mM for CTP (in the phosphatase activity assay)</KM>
        <KM evidence="4 6">0.76 mM for 2'-AMP</KM>
        <KM evidence="4 6">0.49 mM for 2',3'-cAMP</KM>
        <KM evidence="4 6">1.6 mM for 2',3'-cGMP</KM>
        <Vmax evidence="4 6">12.4 umol/min/mg enzyme with pNPP as substrate</Vmax>
        <Vmax evidence="4 6">3.01 umol/min/mg enzyme with PPi as substrate</Vmax>
        <Vmax evidence="4 6">17.9 umol/min/mg enzyme with NADP as substrate</Vmax>
        <Vmax evidence="4 6">1.49 umol/min/mg enzyme with ADP as substrate</Vmax>
        <Vmax evidence="4 6">4.53 umol/min/mg enzyme with ATP as substrate (in the phosphatase activity assay)</Vmax>
        <Vmax evidence="4 6">5.8 umol/min/mg enzyme with CDP as substrate</Vmax>
        <Vmax evidence="4 6">4.03 umol/min/mg enzyme with CTP as substrate (in the phosphatase activity assay)</Vmax>
        <Vmax evidence="4 6">3.71 umol/min/mg enzyme with 2'-AMP as substrate</Vmax>
        <Vmax evidence="4 6">3.21 umol/min/mg enzyme with 2',3'-cAMP as substrate</Vmax>
        <Vmax evidence="4 6">2.36 umol/min/mg enzyme with 2',3'-cGMP as substrate</Vmax>
    </kinetics>
    <phDependence>
        <text evidence="4 6">Optimum pH is 9.4 for AMP incorporation, 10.0 for CMP incorporation, and 7.0 for the phosphatase and phosphodiesterase activities.</text>
    </phDependence>
</comment>
<comment type="subunit">
    <text evidence="4">Monomer. Can also form homodimers and oligomers, but with low levels.</text>
</comment>
<comment type="interaction">
    <interactant intactId="EBI-545256">
        <id>P06961</id>
    </interactant>
    <interactant intactId="EBI-562575">
        <id>P0A6M4</id>
        <label>dtd</label>
    </interactant>
    <organismsDiffer>false</organismsDiffer>
    <experiments>2</experiments>
</comment>
<comment type="domain">
    <text>Comprises two domains: an N-terminal domain containing the nucleotidyltransferase activity and a C-terminal HD domain associated with both phosphodiesterase and phosphatase activities.</text>
</comment>
<comment type="miscellaneous">
    <text evidence="3">A single active site specifically recognizes both ATP and CTP and is responsible for their addition.</text>
</comment>
<comment type="similarity">
    <text evidence="3 8">Belongs to the tRNA nucleotidyltransferase/poly(A) polymerase family. Bacterial CCA-adding enzyme type 1 subfamily.</text>
</comment>
<organism>
    <name type="scientific">Escherichia coli (strain K12)</name>
    <dbReference type="NCBI Taxonomy" id="83333"/>
    <lineage>
        <taxon>Bacteria</taxon>
        <taxon>Pseudomonadati</taxon>
        <taxon>Pseudomonadota</taxon>
        <taxon>Gammaproteobacteria</taxon>
        <taxon>Enterobacterales</taxon>
        <taxon>Enterobacteriaceae</taxon>
        <taxon>Escherichia</taxon>
    </lineage>
</organism>
<evidence type="ECO:0000250" key="1">
    <source>
        <dbReference type="UniProtKB" id="O28126"/>
    </source>
</evidence>
<evidence type="ECO:0000250" key="2">
    <source>
        <dbReference type="UniProtKB" id="O66728"/>
    </source>
</evidence>
<evidence type="ECO:0000255" key="3">
    <source>
        <dbReference type="HAMAP-Rule" id="MF_01261"/>
    </source>
</evidence>
<evidence type="ECO:0000269" key="4">
    <source>
    </source>
</evidence>
<evidence type="ECO:0000269" key="5">
    <source>
    </source>
</evidence>
<evidence type="ECO:0000269" key="6">
    <source>
    </source>
</evidence>
<evidence type="ECO:0000269" key="7">
    <source>
    </source>
</evidence>
<evidence type="ECO:0000305" key="8"/>
<accession>P06961</accession>
<accession>Q2M9E9</accession>
<name>CCA_ECOLI</name>
<sequence length="412" mass="46467">MKIYLVGGAVRDALLGLPVKDRDWVVVGSTPQEMLDAGYQQVGRDFPVFLHPQTHEEYALARTERKSGSGYTGFTCYAAPDVTLEDDLKRRDLTINALAQDDNGEIIDPYNGLGDLQNRLLRHVSPAFGEDPLRVLRVARFAARYAHLGFRIADETLALMREMTHAGELEHLTPERVWKETESALTTRNPQVFFQVLRDCGALRVLFPEIDALFGVPAPAKWHPEIDTGIHTLMTLSMAAMLSPQVDVRFATLCHDLGKGLTPPELWPRHHGHGPAGVKLVEQLCQRLRVPNEIRDLARLVAEFHDLIHTFPMLNPKTIVKLFDSIDAWRKPQRVEQLALTSEADVRGRTGFESADYPQGRWLREAWEVAQSVPTKAVVEAGFKGVEIREELTRRRIAAVASWKEQRCPKPE</sequence>